<protein>
    <recommendedName>
        <fullName evidence="1">Adenine deaminase</fullName>
        <shortName evidence="1">Adenase</shortName>
        <shortName evidence="1">Adenine aminase</shortName>
        <ecNumber evidence="1">3.5.4.2</ecNumber>
    </recommendedName>
</protein>
<comment type="catalytic activity">
    <reaction evidence="1">
        <text>adenine + H2O + H(+) = hypoxanthine + NH4(+)</text>
        <dbReference type="Rhea" id="RHEA:23688"/>
        <dbReference type="ChEBI" id="CHEBI:15377"/>
        <dbReference type="ChEBI" id="CHEBI:15378"/>
        <dbReference type="ChEBI" id="CHEBI:16708"/>
        <dbReference type="ChEBI" id="CHEBI:17368"/>
        <dbReference type="ChEBI" id="CHEBI:28938"/>
        <dbReference type="EC" id="3.5.4.2"/>
    </reaction>
</comment>
<comment type="cofactor">
    <cofactor evidence="1">
        <name>Mn(2+)</name>
        <dbReference type="ChEBI" id="CHEBI:29035"/>
    </cofactor>
</comment>
<comment type="subunit">
    <text evidence="1">Homodimer.</text>
</comment>
<comment type="similarity">
    <text evidence="1">Belongs to the metallo-dependent hydrolases superfamily. Adenine deaminase family.</text>
</comment>
<gene>
    <name evidence="1" type="primary">ade</name>
    <name type="ordered locus">Ecok1_36510</name>
    <name type="ORF">APECO1_2787</name>
</gene>
<dbReference type="EC" id="3.5.4.2" evidence="1"/>
<dbReference type="EMBL" id="CP000468">
    <property type="protein sequence ID" value="ABJ03145.1"/>
    <property type="molecule type" value="Genomic_DNA"/>
</dbReference>
<dbReference type="SMR" id="A1AHK5"/>
<dbReference type="KEGG" id="ecv:APECO1_2787"/>
<dbReference type="HOGENOM" id="CLU_027935_0_0_6"/>
<dbReference type="Proteomes" id="UP000008216">
    <property type="component" value="Chromosome"/>
</dbReference>
<dbReference type="GO" id="GO:0000034">
    <property type="term" value="F:adenine deaminase activity"/>
    <property type="evidence" value="ECO:0007669"/>
    <property type="project" value="UniProtKB-UniRule"/>
</dbReference>
<dbReference type="GO" id="GO:0006146">
    <property type="term" value="P:adenine catabolic process"/>
    <property type="evidence" value="ECO:0007669"/>
    <property type="project" value="InterPro"/>
</dbReference>
<dbReference type="CDD" id="cd01295">
    <property type="entry name" value="AdeC"/>
    <property type="match status" value="1"/>
</dbReference>
<dbReference type="FunFam" id="3.20.20.140:FF:000016">
    <property type="entry name" value="Adenine deaminase"/>
    <property type="match status" value="1"/>
</dbReference>
<dbReference type="Gene3D" id="3.20.20.140">
    <property type="entry name" value="Metal-dependent hydrolases"/>
    <property type="match status" value="1"/>
</dbReference>
<dbReference type="Gene3D" id="2.30.40.10">
    <property type="entry name" value="Urease, subunit C, domain 1"/>
    <property type="match status" value="1"/>
</dbReference>
<dbReference type="HAMAP" id="MF_01518">
    <property type="entry name" value="Adenine_deamin"/>
    <property type="match status" value="1"/>
</dbReference>
<dbReference type="InterPro" id="IPR006679">
    <property type="entry name" value="Adenine_deam"/>
</dbReference>
<dbReference type="InterPro" id="IPR026912">
    <property type="entry name" value="Adenine_deam_C"/>
</dbReference>
<dbReference type="InterPro" id="IPR006680">
    <property type="entry name" value="Amidohydro-rel"/>
</dbReference>
<dbReference type="InterPro" id="IPR011059">
    <property type="entry name" value="Metal-dep_hydrolase_composite"/>
</dbReference>
<dbReference type="InterPro" id="IPR032466">
    <property type="entry name" value="Metal_Hydrolase"/>
</dbReference>
<dbReference type="NCBIfam" id="TIGR01178">
    <property type="entry name" value="ade"/>
    <property type="match status" value="1"/>
</dbReference>
<dbReference type="NCBIfam" id="NF007457">
    <property type="entry name" value="PRK10027.1"/>
    <property type="match status" value="1"/>
</dbReference>
<dbReference type="PANTHER" id="PTHR11113:SF2">
    <property type="entry name" value="ADENINE DEAMINASE"/>
    <property type="match status" value="1"/>
</dbReference>
<dbReference type="PANTHER" id="PTHR11113">
    <property type="entry name" value="N-ACETYLGLUCOSAMINE-6-PHOSPHATE DEACETYLASE"/>
    <property type="match status" value="1"/>
</dbReference>
<dbReference type="Pfam" id="PF13382">
    <property type="entry name" value="Adenine_deam_C"/>
    <property type="match status" value="1"/>
</dbReference>
<dbReference type="Pfam" id="PF01979">
    <property type="entry name" value="Amidohydro_1"/>
    <property type="match status" value="1"/>
</dbReference>
<dbReference type="SUPFAM" id="SSF51338">
    <property type="entry name" value="Composite domain of metallo-dependent hydrolases"/>
    <property type="match status" value="1"/>
</dbReference>
<dbReference type="SUPFAM" id="SSF51556">
    <property type="entry name" value="Metallo-dependent hydrolases"/>
    <property type="match status" value="1"/>
</dbReference>
<evidence type="ECO:0000255" key="1">
    <source>
        <dbReference type="HAMAP-Rule" id="MF_01518"/>
    </source>
</evidence>
<keyword id="KW-0378">Hydrolase</keyword>
<keyword id="KW-0464">Manganese</keyword>
<keyword id="KW-1185">Reference proteome</keyword>
<accession>A1AHK5</accession>
<name>ADEC_ECOK1</name>
<proteinExistence type="inferred from homology"/>
<organism>
    <name type="scientific">Escherichia coli O1:K1 / APEC</name>
    <dbReference type="NCBI Taxonomy" id="405955"/>
    <lineage>
        <taxon>Bacteria</taxon>
        <taxon>Pseudomonadati</taxon>
        <taxon>Pseudomonadota</taxon>
        <taxon>Gammaproteobacteria</taxon>
        <taxon>Enterobacterales</taxon>
        <taxon>Enterobacteriaceae</taxon>
        <taxon>Escherichia</taxon>
    </lineage>
</organism>
<sequence length="588" mass="63851">MNNSINHKFHHISRTEYQELLAVSRGDAVADYIIDNVSILDLINGGEISGPIVIKGRYIAGVGAEYADAPALQRIDARGATAVPGFIDAHLHIESSMMTPVTFETATLPRGLTTVICDPHEIVNVMGEAGFAWFARCAEQARQNQYLQVSSCVPALEGCDVNGASFTLEQMLAWRDHPQVTGLAEMMDYPGVISGQNALLDKLDAFRHLTLDGHCPGLGGKELNAYIAAGIENCHESYQLEEGRRKLQLGMSLMIREGSAARNLNALAPLINEFNSPQCMLCTDDRNPWEIAHEGHIDALIRRLIEQHNVPLHVAYRVASWSTARHFGLNHLGLLAPGKQADIVLLSDARKVTVQQVLVKGEPIDAQTLQAEESARLAQSAPPYGNTIDRQPVSASDFALQFTPGKRYRVIEVIHNELITHSRSSVYSENGFDRDDVCFIAVLERYGQRLAPACGLLGGFGLNEGALAATVSHDSHNIVVIGRSAEEMALAVNQVIQDGGGLCVVRNGQVQSHLPLPIAGLMSTDTAQSLAEQIDALKAAARECGPLPDEPFIQMAFLSLPVIPALKLTSQGLFDGEKFAFTTLEFTE</sequence>
<feature type="chain" id="PRO_0000296724" description="Adenine deaminase">
    <location>
        <begin position="1"/>
        <end position="588"/>
    </location>
</feature>
<reference key="1">
    <citation type="journal article" date="2007" name="J. Bacteriol.">
        <title>The genome sequence of avian pathogenic Escherichia coli strain O1:K1:H7 shares strong similarities with human extraintestinal pathogenic E. coli genomes.</title>
        <authorList>
            <person name="Johnson T.J."/>
            <person name="Kariyawasam S."/>
            <person name="Wannemuehler Y."/>
            <person name="Mangiamele P."/>
            <person name="Johnson S.J."/>
            <person name="Doetkott C."/>
            <person name="Skyberg J.A."/>
            <person name="Lynne A.M."/>
            <person name="Johnson J.R."/>
            <person name="Nolan L.K."/>
        </authorList>
    </citation>
    <scope>NUCLEOTIDE SEQUENCE [LARGE SCALE GENOMIC DNA]</scope>
</reference>